<evidence type="ECO:0000255" key="1">
    <source>
        <dbReference type="HAMAP-Rule" id="MF_00019"/>
    </source>
</evidence>
<sequence>MTRLTLALDVMGGDFGPSVTVPAALQALNSNSQLTLLLVGNPDAITPLLAKADFEQRSRLQIIPAQSVIASDARPSQAIRASRGSSMRVALELVKEGRAQACVSAGNTGALMGLAKLLLKPLEGIERPALVTVLPHQQKGKTVVLDLGANVDCDSTMLVQFAIMGSVLAEEVVEIPNPRVALLNIGEEEVKGLDSIRDASAVLKTIPSINYIGYLEANELLTGKTDVLVCDGFTGNVTLKTMEGVVRMFLSLLKSQGEGKKRSWWLLLLKRWLQKSLTRRFSHLNPDQYNGACLLGLRGTVIKSHGAANQRAFAVAIEQAVQAVQRQVPQRIAARLESVYPAGFELLDGGKSGTLR</sequence>
<feature type="chain" id="PRO_1000001756" description="Phosphate acyltransferase">
    <location>
        <begin position="1"/>
        <end position="356"/>
    </location>
</feature>
<comment type="function">
    <text evidence="1">Catalyzes the reversible formation of acyl-phosphate (acyl-PO(4)) from acyl-[acyl-carrier-protein] (acyl-ACP). This enzyme utilizes acyl-ACP as fatty acyl donor, but not acyl-CoA.</text>
</comment>
<comment type="catalytic activity">
    <reaction evidence="1">
        <text>a fatty acyl-[ACP] + phosphate = an acyl phosphate + holo-[ACP]</text>
        <dbReference type="Rhea" id="RHEA:42292"/>
        <dbReference type="Rhea" id="RHEA-COMP:9685"/>
        <dbReference type="Rhea" id="RHEA-COMP:14125"/>
        <dbReference type="ChEBI" id="CHEBI:43474"/>
        <dbReference type="ChEBI" id="CHEBI:59918"/>
        <dbReference type="ChEBI" id="CHEBI:64479"/>
        <dbReference type="ChEBI" id="CHEBI:138651"/>
        <dbReference type="EC" id="2.3.1.274"/>
    </reaction>
</comment>
<comment type="pathway">
    <text evidence="1">Lipid metabolism; phospholipid metabolism.</text>
</comment>
<comment type="subunit">
    <text evidence="1">Homodimer. Probably interacts with PlsY.</text>
</comment>
<comment type="subcellular location">
    <subcellularLocation>
        <location evidence="1">Cytoplasm</location>
    </subcellularLocation>
    <text evidence="1">Associated with the membrane possibly through PlsY.</text>
</comment>
<comment type="similarity">
    <text evidence="1">Belongs to the PlsX family.</text>
</comment>
<accession>Q1RD67</accession>
<gene>
    <name evidence="1" type="primary">plsX</name>
    <name type="ordered locus">UTI89_C1215</name>
</gene>
<reference key="1">
    <citation type="journal article" date="2006" name="Proc. Natl. Acad. Sci. U.S.A.">
        <title>Identification of genes subject to positive selection in uropathogenic strains of Escherichia coli: a comparative genomics approach.</title>
        <authorList>
            <person name="Chen S.L."/>
            <person name="Hung C.-S."/>
            <person name="Xu J."/>
            <person name="Reigstad C.S."/>
            <person name="Magrini V."/>
            <person name="Sabo A."/>
            <person name="Blasiar D."/>
            <person name="Bieri T."/>
            <person name="Meyer R.R."/>
            <person name="Ozersky P."/>
            <person name="Armstrong J.R."/>
            <person name="Fulton R.S."/>
            <person name="Latreille J.P."/>
            <person name="Spieth J."/>
            <person name="Hooton T.M."/>
            <person name="Mardis E.R."/>
            <person name="Hultgren S.J."/>
            <person name="Gordon J.I."/>
        </authorList>
    </citation>
    <scope>NUCLEOTIDE SEQUENCE [LARGE SCALE GENOMIC DNA]</scope>
    <source>
        <strain>UTI89 / UPEC</strain>
    </source>
</reference>
<name>PLSX_ECOUT</name>
<keyword id="KW-0963">Cytoplasm</keyword>
<keyword id="KW-0444">Lipid biosynthesis</keyword>
<keyword id="KW-0443">Lipid metabolism</keyword>
<keyword id="KW-0594">Phospholipid biosynthesis</keyword>
<keyword id="KW-1208">Phospholipid metabolism</keyword>
<keyword id="KW-0808">Transferase</keyword>
<protein>
    <recommendedName>
        <fullName evidence="1">Phosphate acyltransferase</fullName>
        <ecNumber evidence="1">2.3.1.274</ecNumber>
    </recommendedName>
    <alternativeName>
        <fullName evidence="1">Acyl-ACP phosphotransacylase</fullName>
    </alternativeName>
    <alternativeName>
        <fullName evidence="1">Acyl-[acyl-carrier-protein]--phosphate acyltransferase</fullName>
    </alternativeName>
    <alternativeName>
        <fullName evidence="1">Phosphate-acyl-ACP acyltransferase</fullName>
    </alternativeName>
</protein>
<dbReference type="EC" id="2.3.1.274" evidence="1"/>
<dbReference type="EMBL" id="CP000243">
    <property type="protein sequence ID" value="ABE06697.1"/>
    <property type="molecule type" value="Genomic_DNA"/>
</dbReference>
<dbReference type="RefSeq" id="WP_000197578.1">
    <property type="nucleotide sequence ID" value="NZ_CP064825.1"/>
</dbReference>
<dbReference type="SMR" id="Q1RD67"/>
<dbReference type="GeneID" id="93776318"/>
<dbReference type="KEGG" id="eci:UTI89_C1215"/>
<dbReference type="HOGENOM" id="CLU_039379_1_0_6"/>
<dbReference type="UniPathway" id="UPA00085"/>
<dbReference type="Proteomes" id="UP000001952">
    <property type="component" value="Chromosome"/>
</dbReference>
<dbReference type="GO" id="GO:0005737">
    <property type="term" value="C:cytoplasm"/>
    <property type="evidence" value="ECO:0007669"/>
    <property type="project" value="UniProtKB-SubCell"/>
</dbReference>
<dbReference type="GO" id="GO:0043811">
    <property type="term" value="F:phosphate:acyl-[acyl carrier protein] acyltransferase activity"/>
    <property type="evidence" value="ECO:0007669"/>
    <property type="project" value="UniProtKB-UniRule"/>
</dbReference>
<dbReference type="GO" id="GO:0006633">
    <property type="term" value="P:fatty acid biosynthetic process"/>
    <property type="evidence" value="ECO:0007669"/>
    <property type="project" value="UniProtKB-UniRule"/>
</dbReference>
<dbReference type="GO" id="GO:0008654">
    <property type="term" value="P:phospholipid biosynthetic process"/>
    <property type="evidence" value="ECO:0007669"/>
    <property type="project" value="UniProtKB-KW"/>
</dbReference>
<dbReference type="FunFam" id="3.40.718.10:FF:000008">
    <property type="entry name" value="Phosphate acyltransferase"/>
    <property type="match status" value="1"/>
</dbReference>
<dbReference type="Gene3D" id="3.40.718.10">
    <property type="entry name" value="Isopropylmalate Dehydrogenase"/>
    <property type="match status" value="1"/>
</dbReference>
<dbReference type="HAMAP" id="MF_00019">
    <property type="entry name" value="PlsX"/>
    <property type="match status" value="1"/>
</dbReference>
<dbReference type="InterPro" id="IPR003664">
    <property type="entry name" value="FA_synthesis"/>
</dbReference>
<dbReference type="InterPro" id="IPR012281">
    <property type="entry name" value="Phospholipid_synth_PlsX-like"/>
</dbReference>
<dbReference type="NCBIfam" id="TIGR00182">
    <property type="entry name" value="plsX"/>
    <property type="match status" value="1"/>
</dbReference>
<dbReference type="PANTHER" id="PTHR30100">
    <property type="entry name" value="FATTY ACID/PHOSPHOLIPID SYNTHESIS PROTEIN PLSX"/>
    <property type="match status" value="1"/>
</dbReference>
<dbReference type="PANTHER" id="PTHR30100:SF1">
    <property type="entry name" value="PHOSPHATE ACYLTRANSFERASE"/>
    <property type="match status" value="1"/>
</dbReference>
<dbReference type="Pfam" id="PF02504">
    <property type="entry name" value="FA_synthesis"/>
    <property type="match status" value="1"/>
</dbReference>
<dbReference type="PIRSF" id="PIRSF002465">
    <property type="entry name" value="Phsphlp_syn_PlsX"/>
    <property type="match status" value="1"/>
</dbReference>
<dbReference type="SUPFAM" id="SSF53659">
    <property type="entry name" value="Isocitrate/Isopropylmalate dehydrogenase-like"/>
    <property type="match status" value="1"/>
</dbReference>
<organism>
    <name type="scientific">Escherichia coli (strain UTI89 / UPEC)</name>
    <dbReference type="NCBI Taxonomy" id="364106"/>
    <lineage>
        <taxon>Bacteria</taxon>
        <taxon>Pseudomonadati</taxon>
        <taxon>Pseudomonadota</taxon>
        <taxon>Gammaproteobacteria</taxon>
        <taxon>Enterobacterales</taxon>
        <taxon>Enterobacteriaceae</taxon>
        <taxon>Escherichia</taxon>
    </lineage>
</organism>
<proteinExistence type="inferred from homology"/>